<organism>
    <name type="scientific">Mycobacterium avium (strain 104)</name>
    <dbReference type="NCBI Taxonomy" id="243243"/>
    <lineage>
        <taxon>Bacteria</taxon>
        <taxon>Bacillati</taxon>
        <taxon>Actinomycetota</taxon>
        <taxon>Actinomycetes</taxon>
        <taxon>Mycobacteriales</taxon>
        <taxon>Mycobacteriaceae</taxon>
        <taxon>Mycobacterium</taxon>
        <taxon>Mycobacterium avium complex (MAC)</taxon>
    </lineage>
</organism>
<comment type="function">
    <text evidence="1">Specifically methylates the N4 position of cytidine in position 1402 (C1402) of 16S rRNA.</text>
</comment>
<comment type="catalytic activity">
    <reaction evidence="1">
        <text>cytidine(1402) in 16S rRNA + S-adenosyl-L-methionine = N(4)-methylcytidine(1402) in 16S rRNA + S-adenosyl-L-homocysteine + H(+)</text>
        <dbReference type="Rhea" id="RHEA:42928"/>
        <dbReference type="Rhea" id="RHEA-COMP:10286"/>
        <dbReference type="Rhea" id="RHEA-COMP:10287"/>
        <dbReference type="ChEBI" id="CHEBI:15378"/>
        <dbReference type="ChEBI" id="CHEBI:57856"/>
        <dbReference type="ChEBI" id="CHEBI:59789"/>
        <dbReference type="ChEBI" id="CHEBI:74506"/>
        <dbReference type="ChEBI" id="CHEBI:82748"/>
        <dbReference type="EC" id="2.1.1.199"/>
    </reaction>
</comment>
<comment type="subcellular location">
    <subcellularLocation>
        <location evidence="1">Cytoplasm</location>
    </subcellularLocation>
</comment>
<comment type="similarity">
    <text evidence="1">Belongs to the methyltransferase superfamily. RsmH family.</text>
</comment>
<comment type="sequence caution" evidence="2">
    <conflict type="erroneous initiation">
        <sequence resource="EMBL-CDS" id="ABK66998"/>
    </conflict>
    <text>Truncated N-terminus.</text>
</comment>
<keyword id="KW-0963">Cytoplasm</keyword>
<keyword id="KW-0489">Methyltransferase</keyword>
<keyword id="KW-0698">rRNA processing</keyword>
<keyword id="KW-0949">S-adenosyl-L-methionine</keyword>
<keyword id="KW-0808">Transferase</keyword>
<name>RSMH_MYCA1</name>
<accession>A0QF44</accession>
<protein>
    <recommendedName>
        <fullName evidence="1">Ribosomal RNA small subunit methyltransferase H</fullName>
        <ecNumber evidence="1">2.1.1.199</ecNumber>
    </recommendedName>
    <alternativeName>
        <fullName evidence="1">16S rRNA m(4)C1402 methyltransferase</fullName>
    </alternativeName>
    <alternativeName>
        <fullName evidence="1">rRNA (cytosine-N(4)-)-methyltransferase RsmH</fullName>
    </alternativeName>
</protein>
<feature type="chain" id="PRO_0000386985" description="Ribosomal RNA small subunit methyltransferase H">
    <location>
        <begin position="1"/>
        <end position="386"/>
    </location>
</feature>
<feature type="binding site" evidence="1">
    <location>
        <begin position="97"/>
        <end position="99"/>
    </location>
    <ligand>
        <name>S-adenosyl-L-methionine</name>
        <dbReference type="ChEBI" id="CHEBI:59789"/>
    </ligand>
</feature>
<feature type="binding site" evidence="1">
    <location>
        <position position="116"/>
    </location>
    <ligand>
        <name>S-adenosyl-L-methionine</name>
        <dbReference type="ChEBI" id="CHEBI:59789"/>
    </ligand>
</feature>
<feature type="binding site" evidence="1">
    <location>
        <position position="143"/>
    </location>
    <ligand>
        <name>S-adenosyl-L-methionine</name>
        <dbReference type="ChEBI" id="CHEBI:59789"/>
    </ligand>
</feature>
<feature type="binding site" evidence="1">
    <location>
        <position position="167"/>
    </location>
    <ligand>
        <name>S-adenosyl-L-methionine</name>
        <dbReference type="ChEBI" id="CHEBI:59789"/>
    </ligand>
</feature>
<feature type="binding site" evidence="1">
    <location>
        <position position="174"/>
    </location>
    <ligand>
        <name>S-adenosyl-L-methionine</name>
        <dbReference type="ChEBI" id="CHEBI:59789"/>
    </ligand>
</feature>
<evidence type="ECO:0000255" key="1">
    <source>
        <dbReference type="HAMAP-Rule" id="MF_01007"/>
    </source>
</evidence>
<evidence type="ECO:0000305" key="2"/>
<sequence>MKHSATSSEAHARATWPLPEPTLAYFPNARFVPSDRDLDAGAARPIRGGVAVVDDSPDFGHVPVLLERCVELLTPALTRRHPDGSGAVLLDATLGAGGHAERFLTDLPGLRLIALDRDPSALEIARERLARFADRITLVHTRYDGIAAALTESGYAATESVDGILFDLGVSSMQLDRPERGFAYAQDAPLDMRMDPGSPLTAADILNTYDEAELADILHRYGEERFARRIAAQIVRRRAKEPFTSTADLVSLLYQAIPAPARRTGGHPAKRTFQALRIAVNDELDTLRCALPAALDALAVDGRIVVLAYQSLEDRIVKRLFAQAVASRTPVDLPVELPGHEPRFRALTHGAGRADAAEIERNPRSAAVRLRALQRTQAPQATGKGD</sequence>
<gene>
    <name evidence="1" type="primary">rsmH</name>
    <name type="synonym">mraW</name>
    <name type="ordered locus">MAV_2328</name>
</gene>
<reference key="1">
    <citation type="submission" date="2006-10" db="EMBL/GenBank/DDBJ databases">
        <authorList>
            <person name="Fleischmann R.D."/>
            <person name="Dodson R.J."/>
            <person name="Haft D.H."/>
            <person name="Merkel J.S."/>
            <person name="Nelson W.C."/>
            <person name="Fraser C.M."/>
        </authorList>
    </citation>
    <scope>NUCLEOTIDE SEQUENCE [LARGE SCALE GENOMIC DNA]</scope>
    <source>
        <strain>104</strain>
    </source>
</reference>
<proteinExistence type="inferred from homology"/>
<dbReference type="EC" id="2.1.1.199" evidence="1"/>
<dbReference type="EMBL" id="CP000479">
    <property type="protein sequence ID" value="ABK66998.1"/>
    <property type="status" value="ALT_INIT"/>
    <property type="molecule type" value="Genomic_DNA"/>
</dbReference>
<dbReference type="SMR" id="A0QF44"/>
<dbReference type="KEGG" id="mav:MAV_2328"/>
<dbReference type="HOGENOM" id="CLU_038422_0_0_11"/>
<dbReference type="Proteomes" id="UP000001574">
    <property type="component" value="Chromosome"/>
</dbReference>
<dbReference type="GO" id="GO:0005737">
    <property type="term" value="C:cytoplasm"/>
    <property type="evidence" value="ECO:0007669"/>
    <property type="project" value="UniProtKB-SubCell"/>
</dbReference>
<dbReference type="GO" id="GO:0071424">
    <property type="term" value="F:rRNA (cytosine-N4-)-methyltransferase activity"/>
    <property type="evidence" value="ECO:0007669"/>
    <property type="project" value="UniProtKB-UniRule"/>
</dbReference>
<dbReference type="GO" id="GO:0070475">
    <property type="term" value="P:rRNA base methylation"/>
    <property type="evidence" value="ECO:0007669"/>
    <property type="project" value="UniProtKB-UniRule"/>
</dbReference>
<dbReference type="FunFam" id="1.10.150.170:FF:000001">
    <property type="entry name" value="Ribosomal RNA small subunit methyltransferase H"/>
    <property type="match status" value="1"/>
</dbReference>
<dbReference type="Gene3D" id="1.10.150.170">
    <property type="entry name" value="Putative methyltransferase TM0872, insert domain"/>
    <property type="match status" value="1"/>
</dbReference>
<dbReference type="Gene3D" id="3.40.50.150">
    <property type="entry name" value="Vaccinia Virus protein VP39"/>
    <property type="match status" value="1"/>
</dbReference>
<dbReference type="HAMAP" id="MF_01007">
    <property type="entry name" value="16SrRNA_methyltr_H"/>
    <property type="match status" value="1"/>
</dbReference>
<dbReference type="InterPro" id="IPR002903">
    <property type="entry name" value="RsmH"/>
</dbReference>
<dbReference type="InterPro" id="IPR023397">
    <property type="entry name" value="SAM-dep_MeTrfase_MraW_recog"/>
</dbReference>
<dbReference type="InterPro" id="IPR029063">
    <property type="entry name" value="SAM-dependent_MTases_sf"/>
</dbReference>
<dbReference type="NCBIfam" id="TIGR00006">
    <property type="entry name" value="16S rRNA (cytosine(1402)-N(4))-methyltransferase RsmH"/>
    <property type="match status" value="1"/>
</dbReference>
<dbReference type="PANTHER" id="PTHR11265:SF0">
    <property type="entry name" value="12S RRNA N4-METHYLCYTIDINE METHYLTRANSFERASE"/>
    <property type="match status" value="1"/>
</dbReference>
<dbReference type="PANTHER" id="PTHR11265">
    <property type="entry name" value="S-ADENOSYL-METHYLTRANSFERASE MRAW"/>
    <property type="match status" value="1"/>
</dbReference>
<dbReference type="Pfam" id="PF01795">
    <property type="entry name" value="Methyltransf_5"/>
    <property type="match status" value="1"/>
</dbReference>
<dbReference type="SUPFAM" id="SSF81799">
    <property type="entry name" value="Putative methyltransferase TM0872, insert domain"/>
    <property type="match status" value="1"/>
</dbReference>
<dbReference type="SUPFAM" id="SSF53335">
    <property type="entry name" value="S-adenosyl-L-methionine-dependent methyltransferases"/>
    <property type="match status" value="1"/>
</dbReference>